<name>LIPL_RAT</name>
<dbReference type="EC" id="3.1.1.34" evidence="3"/>
<dbReference type="EC" id="3.1.1.32" evidence="2"/>
<dbReference type="EMBL" id="L03294">
    <property type="protein sequence ID" value="AAA41534.1"/>
    <property type="molecule type" value="mRNA"/>
</dbReference>
<dbReference type="EMBL" id="BC081836">
    <property type="protein sequence ID" value="AAH81836.1"/>
    <property type="molecule type" value="mRNA"/>
</dbReference>
<dbReference type="PIR" id="JH0790">
    <property type="entry name" value="JH0790"/>
</dbReference>
<dbReference type="RefSeq" id="NP_036730.1">
    <property type="nucleotide sequence ID" value="NM_012598.2"/>
</dbReference>
<dbReference type="RefSeq" id="XP_063131124.1">
    <property type="nucleotide sequence ID" value="XM_063275054.1"/>
</dbReference>
<dbReference type="SMR" id="Q06000"/>
<dbReference type="FunCoup" id="Q06000">
    <property type="interactions" value="86"/>
</dbReference>
<dbReference type="STRING" id="10116.ENSRNOP00000016543"/>
<dbReference type="BindingDB" id="Q06000"/>
<dbReference type="ChEMBL" id="CHEMBL5906"/>
<dbReference type="ESTHER" id="ratno-lipli">
    <property type="family name" value="Lipoprotein_Lipase"/>
</dbReference>
<dbReference type="GlyCosmos" id="Q06000">
    <property type="glycosylation" value="2 sites, No reported glycans"/>
</dbReference>
<dbReference type="GlyGen" id="Q06000">
    <property type="glycosylation" value="2 sites"/>
</dbReference>
<dbReference type="PhosphoSitePlus" id="Q06000"/>
<dbReference type="SwissPalm" id="Q06000"/>
<dbReference type="jPOST" id="Q06000"/>
<dbReference type="PaxDb" id="10116-ENSRNOP00000016543"/>
<dbReference type="ABCD" id="Q06000">
    <property type="antibodies" value="1 sequenced antibody"/>
</dbReference>
<dbReference type="GeneID" id="24539"/>
<dbReference type="KEGG" id="rno:24539"/>
<dbReference type="UCSC" id="RGD:3017">
    <property type="organism name" value="rat"/>
</dbReference>
<dbReference type="AGR" id="RGD:3017"/>
<dbReference type="CTD" id="4023"/>
<dbReference type="RGD" id="3017">
    <property type="gene designation" value="Lpl"/>
</dbReference>
<dbReference type="VEuPathDB" id="HostDB:ENSRNOG00000012181"/>
<dbReference type="eggNOG" id="ENOG502QQ7P">
    <property type="taxonomic scope" value="Eukaryota"/>
</dbReference>
<dbReference type="HOGENOM" id="CLU_027171_1_0_1"/>
<dbReference type="InParanoid" id="Q06000"/>
<dbReference type="OrthoDB" id="27786at9989"/>
<dbReference type="PhylomeDB" id="Q06000"/>
<dbReference type="TreeFam" id="TF324997"/>
<dbReference type="BRENDA" id="3.1.1.34">
    <property type="organism ID" value="5301"/>
</dbReference>
<dbReference type="Reactome" id="R-RNO-8963889">
    <property type="pathway name" value="Assembly of active LPL and LIPC lipase complexes"/>
</dbReference>
<dbReference type="Reactome" id="R-RNO-8963901">
    <property type="pathway name" value="Chylomicron remodeling"/>
</dbReference>
<dbReference type="Reactome" id="R-RNO-975634">
    <property type="pathway name" value="Retinoid metabolism and transport"/>
</dbReference>
<dbReference type="PRO" id="PR:Q06000"/>
<dbReference type="Proteomes" id="UP000002494">
    <property type="component" value="Chromosome 16"/>
</dbReference>
<dbReference type="Bgee" id="ENSRNOG00000012181">
    <property type="expression patterns" value="Expressed in heart and 20 other cell types or tissues"/>
</dbReference>
<dbReference type="GO" id="GO:1902494">
    <property type="term" value="C:catalytic complex"/>
    <property type="evidence" value="ECO:0000266"/>
    <property type="project" value="RGD"/>
</dbReference>
<dbReference type="GO" id="GO:0009986">
    <property type="term" value="C:cell surface"/>
    <property type="evidence" value="ECO:0000266"/>
    <property type="project" value="RGD"/>
</dbReference>
<dbReference type="GO" id="GO:0042627">
    <property type="term" value="C:chylomicron"/>
    <property type="evidence" value="ECO:0007669"/>
    <property type="project" value="UniProtKB-KW"/>
</dbReference>
<dbReference type="GO" id="GO:0005576">
    <property type="term" value="C:extracellular region"/>
    <property type="evidence" value="ECO:0000266"/>
    <property type="project" value="RGD"/>
</dbReference>
<dbReference type="GO" id="GO:0005615">
    <property type="term" value="C:extracellular space"/>
    <property type="evidence" value="ECO:0000314"/>
    <property type="project" value="RGD"/>
</dbReference>
<dbReference type="GO" id="GO:0005886">
    <property type="term" value="C:plasma membrane"/>
    <property type="evidence" value="ECO:0007669"/>
    <property type="project" value="UniProtKB-SubCell"/>
</dbReference>
<dbReference type="GO" id="GO:0034361">
    <property type="term" value="C:very-low-density lipoprotein particle"/>
    <property type="evidence" value="ECO:0007669"/>
    <property type="project" value="UniProtKB-KW"/>
</dbReference>
<dbReference type="GO" id="GO:0034185">
    <property type="term" value="F:apolipoprotein binding"/>
    <property type="evidence" value="ECO:0000266"/>
    <property type="project" value="RGD"/>
</dbReference>
<dbReference type="GO" id="GO:0005509">
    <property type="term" value="F:calcium ion binding"/>
    <property type="evidence" value="ECO:0000266"/>
    <property type="project" value="RGD"/>
</dbReference>
<dbReference type="GO" id="GO:0043395">
    <property type="term" value="F:heparan sulfate proteoglycan binding"/>
    <property type="evidence" value="ECO:0000250"/>
    <property type="project" value="UniProtKB"/>
</dbReference>
<dbReference type="GO" id="GO:0008201">
    <property type="term" value="F:heparin binding"/>
    <property type="evidence" value="ECO:0000250"/>
    <property type="project" value="UniProtKB"/>
</dbReference>
<dbReference type="GO" id="GO:0004465">
    <property type="term" value="F:lipoprotein lipase activity"/>
    <property type="evidence" value="ECO:0000314"/>
    <property type="project" value="CACAO"/>
</dbReference>
<dbReference type="GO" id="GO:0071813">
    <property type="term" value="F:lipoprotein particle binding"/>
    <property type="evidence" value="ECO:0000250"/>
    <property type="project" value="UniProtKB"/>
</dbReference>
<dbReference type="GO" id="GO:0008970">
    <property type="term" value="F:phospholipase A1 activity"/>
    <property type="evidence" value="ECO:0000250"/>
    <property type="project" value="UniProtKB"/>
</dbReference>
<dbReference type="GO" id="GO:0042803">
    <property type="term" value="F:protein homodimerization activity"/>
    <property type="evidence" value="ECO:0000266"/>
    <property type="project" value="RGD"/>
</dbReference>
<dbReference type="GO" id="GO:0005102">
    <property type="term" value="F:signaling receptor binding"/>
    <property type="evidence" value="ECO:0000266"/>
    <property type="project" value="RGD"/>
</dbReference>
<dbReference type="GO" id="GO:0004806">
    <property type="term" value="F:triacylglycerol lipase activity"/>
    <property type="evidence" value="ECO:0000266"/>
    <property type="project" value="RGD"/>
</dbReference>
<dbReference type="GO" id="GO:0017129">
    <property type="term" value="F:triglyceride binding"/>
    <property type="evidence" value="ECO:0000314"/>
    <property type="project" value="RGD"/>
</dbReference>
<dbReference type="GO" id="GO:0071398">
    <property type="term" value="P:cellular response to fatty acid"/>
    <property type="evidence" value="ECO:0000266"/>
    <property type="project" value="RGD"/>
</dbReference>
<dbReference type="GO" id="GO:0031670">
    <property type="term" value="P:cellular response to nutrient"/>
    <property type="evidence" value="ECO:0000266"/>
    <property type="project" value="RGD"/>
</dbReference>
<dbReference type="GO" id="GO:0042632">
    <property type="term" value="P:cholesterol homeostasis"/>
    <property type="evidence" value="ECO:0000266"/>
    <property type="project" value="RGD"/>
</dbReference>
<dbReference type="GO" id="GO:0034371">
    <property type="term" value="P:chylomicron remodeling"/>
    <property type="evidence" value="ECO:0000250"/>
    <property type="project" value="UniProtKB"/>
</dbReference>
<dbReference type="GO" id="GO:0006633">
    <property type="term" value="P:fatty acid biosynthetic process"/>
    <property type="evidence" value="ECO:0000266"/>
    <property type="project" value="RGD"/>
</dbReference>
<dbReference type="GO" id="GO:0006631">
    <property type="term" value="P:fatty acid metabolic process"/>
    <property type="evidence" value="ECO:0000250"/>
    <property type="project" value="UniProtKB"/>
</dbReference>
<dbReference type="GO" id="GO:0034375">
    <property type="term" value="P:high-density lipoprotein particle remodeling"/>
    <property type="evidence" value="ECO:0000318"/>
    <property type="project" value="GO_Central"/>
</dbReference>
<dbReference type="GO" id="GO:0016042">
    <property type="term" value="P:lipid catabolic process"/>
    <property type="evidence" value="ECO:0000314"/>
    <property type="project" value="RGD"/>
</dbReference>
<dbReference type="GO" id="GO:0055096">
    <property type="term" value="P:low-density lipoprotein particle mediated signaling"/>
    <property type="evidence" value="ECO:0000266"/>
    <property type="project" value="RGD"/>
</dbReference>
<dbReference type="GO" id="GO:1900077">
    <property type="term" value="P:negative regulation of cellular response to insulin stimulus"/>
    <property type="evidence" value="ECO:0000315"/>
    <property type="project" value="RGD"/>
</dbReference>
<dbReference type="GO" id="GO:1904179">
    <property type="term" value="P:positive regulation of adipose tissue development"/>
    <property type="evidence" value="ECO:0000266"/>
    <property type="project" value="RGD"/>
</dbReference>
<dbReference type="GO" id="GO:2000343">
    <property type="term" value="P:positive regulation of chemokine (C-X-C motif) ligand 2 production"/>
    <property type="evidence" value="ECO:0000266"/>
    <property type="project" value="RGD"/>
</dbReference>
<dbReference type="GO" id="GO:0032722">
    <property type="term" value="P:positive regulation of chemokine production"/>
    <property type="evidence" value="ECO:0000266"/>
    <property type="project" value="RGD"/>
</dbReference>
<dbReference type="GO" id="GO:0010886">
    <property type="term" value="P:positive regulation of cholesterol storage"/>
    <property type="evidence" value="ECO:0000266"/>
    <property type="project" value="RGD"/>
</dbReference>
<dbReference type="GO" id="GO:0045600">
    <property type="term" value="P:positive regulation of fat cell differentiation"/>
    <property type="evidence" value="ECO:0000266"/>
    <property type="project" value="RGD"/>
</dbReference>
<dbReference type="GO" id="GO:0050729">
    <property type="term" value="P:positive regulation of inflammatory response"/>
    <property type="evidence" value="ECO:0000266"/>
    <property type="project" value="RGD"/>
</dbReference>
<dbReference type="GO" id="GO:0032731">
    <property type="term" value="P:positive regulation of interleukin-1 beta production"/>
    <property type="evidence" value="ECO:0000266"/>
    <property type="project" value="RGD"/>
</dbReference>
<dbReference type="GO" id="GO:0032755">
    <property type="term" value="P:positive regulation of interleukin-6 production"/>
    <property type="evidence" value="ECO:0000266"/>
    <property type="project" value="RGD"/>
</dbReference>
<dbReference type="GO" id="GO:0010744">
    <property type="term" value="P:positive regulation of macrophage derived foam cell differentiation"/>
    <property type="evidence" value="ECO:0000266"/>
    <property type="project" value="RGD"/>
</dbReference>
<dbReference type="GO" id="GO:0032760">
    <property type="term" value="P:positive regulation of tumor necrosis factor production"/>
    <property type="evidence" value="ECO:0000266"/>
    <property type="project" value="RGD"/>
</dbReference>
<dbReference type="GO" id="GO:0009617">
    <property type="term" value="P:response to bacterium"/>
    <property type="evidence" value="ECO:0000266"/>
    <property type="project" value="RGD"/>
</dbReference>
<dbReference type="GO" id="GO:0009410">
    <property type="term" value="P:response to xenobiotic stimulus"/>
    <property type="evidence" value="ECO:0000270"/>
    <property type="project" value="RGD"/>
</dbReference>
<dbReference type="GO" id="GO:0001523">
    <property type="term" value="P:retinoid metabolic process"/>
    <property type="evidence" value="ECO:0000266"/>
    <property type="project" value="RGD"/>
</dbReference>
<dbReference type="GO" id="GO:0019432">
    <property type="term" value="P:triglyceride biosynthetic process"/>
    <property type="evidence" value="ECO:0000315"/>
    <property type="project" value="RGD"/>
</dbReference>
<dbReference type="GO" id="GO:0019433">
    <property type="term" value="P:triglyceride catabolic process"/>
    <property type="evidence" value="ECO:0000250"/>
    <property type="project" value="UniProtKB"/>
</dbReference>
<dbReference type="GO" id="GO:0070328">
    <property type="term" value="P:triglyceride homeostasis"/>
    <property type="evidence" value="ECO:0000266"/>
    <property type="project" value="RGD"/>
</dbReference>
<dbReference type="GO" id="GO:0006641">
    <property type="term" value="P:triglyceride metabolic process"/>
    <property type="evidence" value="ECO:0000266"/>
    <property type="project" value="RGD"/>
</dbReference>
<dbReference type="GO" id="GO:0034372">
    <property type="term" value="P:very-low-density lipoprotein particle remodeling"/>
    <property type="evidence" value="ECO:0000266"/>
    <property type="project" value="RGD"/>
</dbReference>
<dbReference type="CDD" id="cd00707">
    <property type="entry name" value="Pancreat_lipase_like"/>
    <property type="match status" value="1"/>
</dbReference>
<dbReference type="CDD" id="cd01758">
    <property type="entry name" value="PLAT_LPL"/>
    <property type="match status" value="1"/>
</dbReference>
<dbReference type="FunFam" id="2.60.60.20:FF:000006">
    <property type="entry name" value="Lipoprotein lipase"/>
    <property type="match status" value="1"/>
</dbReference>
<dbReference type="FunFam" id="3.40.50.1820:FF:000031">
    <property type="entry name" value="Lipoprotein lipase"/>
    <property type="match status" value="1"/>
</dbReference>
<dbReference type="Gene3D" id="3.40.50.1820">
    <property type="entry name" value="alpha/beta hydrolase"/>
    <property type="match status" value="1"/>
</dbReference>
<dbReference type="Gene3D" id="2.60.60.20">
    <property type="entry name" value="PLAT/LH2 domain"/>
    <property type="match status" value="1"/>
</dbReference>
<dbReference type="InterPro" id="IPR029058">
    <property type="entry name" value="AB_hydrolase_fold"/>
</dbReference>
<dbReference type="InterPro" id="IPR013818">
    <property type="entry name" value="Lipase"/>
</dbReference>
<dbReference type="InterPro" id="IPR016272">
    <property type="entry name" value="Lipase_LIPH"/>
</dbReference>
<dbReference type="InterPro" id="IPR033906">
    <property type="entry name" value="Lipase_N"/>
</dbReference>
<dbReference type="InterPro" id="IPR002330">
    <property type="entry name" value="Lipo_Lipase"/>
</dbReference>
<dbReference type="InterPro" id="IPR001024">
    <property type="entry name" value="PLAT/LH2_dom"/>
</dbReference>
<dbReference type="InterPro" id="IPR036392">
    <property type="entry name" value="PLAT/LH2_dom_sf"/>
</dbReference>
<dbReference type="InterPro" id="IPR000734">
    <property type="entry name" value="TAG_lipase"/>
</dbReference>
<dbReference type="NCBIfam" id="TIGR03230">
    <property type="entry name" value="lipo_lipase"/>
    <property type="match status" value="1"/>
</dbReference>
<dbReference type="PANTHER" id="PTHR11610">
    <property type="entry name" value="LIPASE"/>
    <property type="match status" value="1"/>
</dbReference>
<dbReference type="PANTHER" id="PTHR11610:SF3">
    <property type="entry name" value="LIPOPROTEIN LIPASE"/>
    <property type="match status" value="1"/>
</dbReference>
<dbReference type="Pfam" id="PF00151">
    <property type="entry name" value="Lipase"/>
    <property type="match status" value="1"/>
</dbReference>
<dbReference type="Pfam" id="PF01477">
    <property type="entry name" value="PLAT"/>
    <property type="match status" value="1"/>
</dbReference>
<dbReference type="PIRSF" id="PIRSF000865">
    <property type="entry name" value="Lipoprotein_lipase_LIPH"/>
    <property type="match status" value="1"/>
</dbReference>
<dbReference type="PRINTS" id="PR00822">
    <property type="entry name" value="LIPOLIPASE"/>
</dbReference>
<dbReference type="PRINTS" id="PR00821">
    <property type="entry name" value="TAGLIPASE"/>
</dbReference>
<dbReference type="SMART" id="SM00308">
    <property type="entry name" value="LH2"/>
    <property type="match status" value="1"/>
</dbReference>
<dbReference type="SUPFAM" id="SSF53474">
    <property type="entry name" value="alpha/beta-Hydrolases"/>
    <property type="match status" value="1"/>
</dbReference>
<dbReference type="SUPFAM" id="SSF49723">
    <property type="entry name" value="Lipase/lipooxygenase domain (PLAT/LH2 domain)"/>
    <property type="match status" value="1"/>
</dbReference>
<dbReference type="PROSITE" id="PS00120">
    <property type="entry name" value="LIPASE_SER"/>
    <property type="match status" value="1"/>
</dbReference>
<dbReference type="PROSITE" id="PS50095">
    <property type="entry name" value="PLAT"/>
    <property type="match status" value="1"/>
</dbReference>
<proteinExistence type="evidence at protein level"/>
<protein>
    <recommendedName>
        <fullName>Lipoprotein lipase</fullName>
        <shortName>LPL</shortName>
        <ecNumber evidence="3">3.1.1.34</ecNumber>
    </recommendedName>
    <alternativeName>
        <fullName>Phospholipase A1</fullName>
        <ecNumber evidence="2">3.1.1.32</ecNumber>
    </alternativeName>
</protein>
<comment type="function">
    <text evidence="2">Key enzyme in triglyceride metabolism (By similarity). Catalyzes the hydrolysis of triglycerides from circulating chylomicrons and very low density lipoproteins (VLDL), and thereby plays an important role in lipid clearance from the blood stream, lipid utilization and storage (By similarity). Although it has both phospholipase and triglyceride lipase activities it is primarily a triglyceride lipase with low but detectable phospholipase activity (By similarity). Mediates margination of triglyceride-rich lipoprotein particles in capillaries (By similarity). Recruited to its site of action on the luminal surface of vascular endothelium by binding to GPIHBP1 and cell surface heparan sulfate proteoglycans (By similarity).</text>
</comment>
<comment type="catalytic activity">
    <reaction evidence="3">
        <text>a triacylglycerol + H2O = a diacylglycerol + a fatty acid + H(+)</text>
        <dbReference type="Rhea" id="RHEA:12044"/>
        <dbReference type="ChEBI" id="CHEBI:15377"/>
        <dbReference type="ChEBI" id="CHEBI:15378"/>
        <dbReference type="ChEBI" id="CHEBI:17855"/>
        <dbReference type="ChEBI" id="CHEBI:18035"/>
        <dbReference type="ChEBI" id="CHEBI:28868"/>
        <dbReference type="EC" id="3.1.1.34"/>
    </reaction>
</comment>
<comment type="catalytic activity">
    <reaction evidence="2">
        <text>a 1,2-diacyl-sn-glycero-3-phosphocholine + H2O = a 2-acyl-sn-glycero-3-phosphocholine + a fatty acid + H(+)</text>
        <dbReference type="Rhea" id="RHEA:18689"/>
        <dbReference type="ChEBI" id="CHEBI:15377"/>
        <dbReference type="ChEBI" id="CHEBI:15378"/>
        <dbReference type="ChEBI" id="CHEBI:28868"/>
        <dbReference type="ChEBI" id="CHEBI:57643"/>
        <dbReference type="ChEBI" id="CHEBI:57875"/>
        <dbReference type="EC" id="3.1.1.32"/>
    </reaction>
</comment>
<comment type="catalytic activity">
    <reaction evidence="2">
        <text>1,2,3-tri-(9Z-octadecenoyl)-glycerol + H2O = di-(9Z)-octadecenoylglycerol + (9Z)-octadecenoate + H(+)</text>
        <dbReference type="Rhea" id="RHEA:38575"/>
        <dbReference type="ChEBI" id="CHEBI:15377"/>
        <dbReference type="ChEBI" id="CHEBI:15378"/>
        <dbReference type="ChEBI" id="CHEBI:30823"/>
        <dbReference type="ChEBI" id="CHEBI:53753"/>
        <dbReference type="ChEBI" id="CHEBI:75945"/>
    </reaction>
    <physiologicalReaction direction="left-to-right" evidence="2">
        <dbReference type="Rhea" id="RHEA:38576"/>
    </physiologicalReaction>
</comment>
<comment type="catalytic activity">
    <reaction evidence="2">
        <text>1,2-di-(9Z-octadecenoyl)-sn-glycero-3-phosphocholine + H2O = (9Z-octadecenoyl)-sn-glycero-3-phosphocholine + (9Z)-octadecenoate + H(+)</text>
        <dbReference type="Rhea" id="RHEA:38699"/>
        <dbReference type="ChEBI" id="CHEBI:15377"/>
        <dbReference type="ChEBI" id="CHEBI:15378"/>
        <dbReference type="ChEBI" id="CHEBI:30823"/>
        <dbReference type="ChEBI" id="CHEBI:74669"/>
        <dbReference type="ChEBI" id="CHEBI:76083"/>
    </reaction>
    <physiologicalReaction direction="left-to-right" evidence="2">
        <dbReference type="Rhea" id="RHEA:38700"/>
    </physiologicalReaction>
</comment>
<comment type="catalytic activity">
    <reaction evidence="2">
        <text>1,2,3-tributanoylglycerol + H2O = dibutanoylglycerol + butanoate + H(+)</text>
        <dbReference type="Rhea" id="RHEA:40475"/>
        <dbReference type="ChEBI" id="CHEBI:15377"/>
        <dbReference type="ChEBI" id="CHEBI:15378"/>
        <dbReference type="ChEBI" id="CHEBI:17968"/>
        <dbReference type="ChEBI" id="CHEBI:35020"/>
        <dbReference type="ChEBI" id="CHEBI:76478"/>
    </reaction>
    <physiologicalReaction direction="left-to-right" evidence="2">
        <dbReference type="Rhea" id="RHEA:40476"/>
    </physiologicalReaction>
</comment>
<comment type="catalytic activity">
    <reaction evidence="2">
        <text>1,2-dihexadecanoyl-sn-glycero-3-phosphocholine + H2O = hexadecanoyl-sn-glycero-3-phosphocholine + hexadecanoate + H(+)</text>
        <dbReference type="Rhea" id="RHEA:41384"/>
        <dbReference type="ChEBI" id="CHEBI:7896"/>
        <dbReference type="ChEBI" id="CHEBI:15377"/>
        <dbReference type="ChEBI" id="CHEBI:15378"/>
        <dbReference type="ChEBI" id="CHEBI:64563"/>
        <dbReference type="ChEBI" id="CHEBI:72999"/>
    </reaction>
    <physiologicalReaction direction="left-to-right" evidence="2">
        <dbReference type="Rhea" id="RHEA:41385"/>
    </physiologicalReaction>
</comment>
<comment type="activity regulation">
    <text evidence="2 3">The apolipoprotein APOC2 acts as a coactivator of LPL activity (By similarity). Ca(2+) binding promotes protein stability and formation of the active homodimer. Interaction with GPIHBP1 protects LPL against inactivation by ANGPTL4 (By similarity).</text>
</comment>
<comment type="subunit">
    <text evidence="2 3">Homodimer. Interacts with GPIHBP1 with 1:1 stoichiometry (By similarity). Interacts with APOC2; the interaction activates LPL activity in the presence of lipids (By similarity). Interaction with heparan sulfate proteoglycans is required to protect LPL against loss of activity. Associates with lipoprotein particles in blood plasma. Interacts with LMF1 and SEL1L; interaction with SEL1L is required to prevent aggregation of newly synthesized LPL in the endoplasmic reticulum (ER), and for normal export of LPL from the ER to the extracellular space (By similarity). Interacts with SORL1; SORL1 acts as a sorting receptor, promoting LPL localization to endosomes and later to lysosomes, leading to degradation of newly synthesized LPL (By similarity).</text>
</comment>
<comment type="subcellular location">
    <subcellularLocation>
        <location evidence="3">Cell membrane</location>
        <topology evidence="3">Peripheral membrane protein</topology>
        <orientation evidence="3">Extracellular side</orientation>
    </subcellularLocation>
    <subcellularLocation>
        <location evidence="3">Secreted</location>
    </subcellularLocation>
    <subcellularLocation>
        <location evidence="3">Secreted</location>
        <location evidence="3">Extracellular space</location>
        <location evidence="3">Extracellular matrix</location>
    </subcellularLocation>
    <text evidence="3">Newly synthesized LPL binds to cell surface heparan proteoglycans and is then released by heparanase. Subsequently, it becomes attached to heparan proteoglycan on endothelial cells. Locates to the plasma membrane of microvilli of hepatocytes with triglyceride-rich lipoproteins (TRL). Some of the bound LPL is then internalized and located inside non-coated endocytic vesicles.</text>
</comment>
<comment type="induction">
    <text evidence="8">Induced by insulin. Inhibited by isoproterenol.</text>
</comment>
<comment type="PTM">
    <text evidence="7">Tyrosine nitration after lipopolysaccharide (LPS) challenge down-regulates the lipase activity.</text>
</comment>
<comment type="similarity">
    <text evidence="9">Belongs to the AB hydrolase superfamily. Lipase family.</text>
</comment>
<feature type="signal peptide" evidence="1">
    <location>
        <begin position="1"/>
        <end position="27"/>
    </location>
</feature>
<feature type="chain" id="PRO_0000017779" description="Lipoprotein lipase">
    <location>
        <begin position="28"/>
        <end position="474"/>
    </location>
</feature>
<feature type="domain" description="PLAT" evidence="5">
    <location>
        <begin position="341"/>
        <end position="464"/>
    </location>
</feature>
<feature type="region of interest" description="Interaction with GPIHBP1" evidence="2">
    <location>
        <begin position="32"/>
        <end position="53"/>
    </location>
</feature>
<feature type="region of interest" description="Essential for determining substrate specificity" evidence="2">
    <location>
        <begin position="243"/>
        <end position="266"/>
    </location>
</feature>
<feature type="region of interest" description="Important for interaction with lipoprotein particles" evidence="2">
    <location>
        <begin position="417"/>
        <end position="421"/>
    </location>
</feature>
<feature type="region of interest" description="Important for heparin binding" evidence="2">
    <location>
        <begin position="430"/>
        <end position="434"/>
    </location>
</feature>
<feature type="region of interest" description="Interaction with GPIHBP1" evidence="2">
    <location>
        <begin position="443"/>
        <end position="467"/>
    </location>
</feature>
<feature type="active site" description="Nucleophile" evidence="2">
    <location>
        <position position="159"/>
    </location>
</feature>
<feature type="active site" description="Charge relay system" evidence="6">
    <location>
        <position position="183"/>
    </location>
</feature>
<feature type="active site" description="Charge relay system" evidence="6">
    <location>
        <position position="268"/>
    </location>
</feature>
<feature type="binding site" evidence="2">
    <location>
        <position position="194"/>
    </location>
    <ligand>
        <name>Ca(2+)</name>
        <dbReference type="ChEBI" id="CHEBI:29108"/>
    </ligand>
</feature>
<feature type="binding site" evidence="2">
    <location>
        <position position="197"/>
    </location>
    <ligand>
        <name>Ca(2+)</name>
        <dbReference type="ChEBI" id="CHEBI:29108"/>
    </ligand>
</feature>
<feature type="binding site" evidence="2">
    <location>
        <position position="199"/>
    </location>
    <ligand>
        <name>Ca(2+)</name>
        <dbReference type="ChEBI" id="CHEBI:29108"/>
    </ligand>
</feature>
<feature type="binding site" evidence="2">
    <location>
        <position position="202"/>
    </location>
    <ligand>
        <name>Ca(2+)</name>
        <dbReference type="ChEBI" id="CHEBI:29108"/>
    </ligand>
</feature>
<feature type="modified residue" description="3'-nitrotyrosine" evidence="7">
    <location>
        <position position="121"/>
    </location>
</feature>
<feature type="modified residue" description="3'-nitrotyrosine" evidence="7">
    <location>
        <position position="191"/>
    </location>
</feature>
<feature type="modified residue" description="3'-nitrotyrosine" evidence="7">
    <location>
        <position position="343"/>
    </location>
</feature>
<feature type="glycosylation site" description="N-linked (GlcNAc...) asparagine" evidence="4">
    <location>
        <position position="70"/>
    </location>
</feature>
<feature type="glycosylation site" description="N-linked (GlcNAc...) asparagine" evidence="4">
    <location>
        <position position="386"/>
    </location>
</feature>
<feature type="disulfide bond" evidence="5">
    <location>
        <begin position="54"/>
        <end position="67"/>
    </location>
</feature>
<feature type="disulfide bond" evidence="5">
    <location>
        <begin position="243"/>
        <end position="266"/>
    </location>
</feature>
<feature type="disulfide bond" evidence="5">
    <location>
        <begin position="291"/>
        <end position="310"/>
    </location>
</feature>
<feature type="disulfide bond" evidence="5">
    <location>
        <begin position="302"/>
        <end position="305"/>
    </location>
</feature>
<feature type="disulfide bond" evidence="5">
    <location>
        <begin position="445"/>
        <end position="465"/>
    </location>
</feature>
<feature type="sequence conflict" description="In Ref. 3; no nucleotide entry." evidence="9" ref="3">
    <original>M</original>
    <variation>V</variation>
    <location>
        <position position="336"/>
    </location>
</feature>
<evidence type="ECO:0000250" key="1"/>
<evidence type="ECO:0000250" key="2">
    <source>
        <dbReference type="UniProtKB" id="P06858"/>
    </source>
</evidence>
<evidence type="ECO:0000250" key="3">
    <source>
        <dbReference type="UniProtKB" id="P11151"/>
    </source>
</evidence>
<evidence type="ECO:0000255" key="4"/>
<evidence type="ECO:0000255" key="5">
    <source>
        <dbReference type="PROSITE-ProRule" id="PRU00152"/>
    </source>
</evidence>
<evidence type="ECO:0000255" key="6">
    <source>
        <dbReference type="PROSITE-ProRule" id="PRU10037"/>
    </source>
</evidence>
<evidence type="ECO:0000269" key="7">
    <source>
    </source>
</evidence>
<evidence type="ECO:0000269" key="8">
    <source>
    </source>
</evidence>
<evidence type="ECO:0000305" key="9"/>
<accession>Q06000</accession>
<gene>
    <name type="primary">Lpl</name>
</gene>
<sequence>MESKALLLVALGVWLQSLTAFRGGVAAADGGRDFSDIESKFALRTPEDTAEDTCHLIPGLADSVSNCHFNHSSKTFVVIHGWTVTGMYESWVPKLVAALYKREPDSNVIVVDWLYRAQQHYPVSAGYTKLVGNDVARFINWLEEEFNYPLDNVHLLGYSLGAHAAGVAGSLTNKKVNRITGLDPAGPNFEYAEAPSRLSPDDADFVDVLHTFTRGSPGRSIGIQKPVGHVDIYPNGGTFQPGCNIGEAIRVIAEKGLGDVDQLVKCSHERSIHLFIDSLLNEENPSKAYRCNSKEAFEKGLCLSCRKNRCNNVGYEINKVRAKRSSKMYLKTRSQMPYKVFHYQVKIHFSGTENDKQNNQAFEISLYGTVAESENIPFTLPEVATNKTYSFLIYTEVDIGELLMMKLKWKNDSYFRWSDWWSSPSFVIEKIRVKAGETQKKVIFCAREKVSHLQKGKDAAVFVKCHDKSLKKSG</sequence>
<reference key="1">
    <citation type="journal article" date="1992" name="Gene">
        <title>Sequence of rat lipoprotein lipase-encoding cDNA.</title>
        <authorList>
            <person name="Brault D."/>
            <person name="Noe L."/>
            <person name="Etienne J."/>
            <person name="Hamelin J."/>
            <person name="Raisonnier A."/>
            <person name="Souli A."/>
            <person name="Chuat J.-C."/>
            <person name="Dugail I."/>
            <person name="Quignard-Boulange A."/>
            <person name="Lavau M."/>
            <person name="Galibert F."/>
        </authorList>
    </citation>
    <scope>NUCLEOTIDE SEQUENCE [MRNA]</scope>
    <source>
        <strain>Sprague-Dawley</strain>
        <tissue>Testis</tissue>
    </source>
</reference>
<reference key="2">
    <citation type="journal article" date="2004" name="Genome Res.">
        <title>The status, quality, and expansion of the NIH full-length cDNA project: the Mammalian Gene Collection (MGC).</title>
        <authorList>
            <consortium name="The MGC Project Team"/>
        </authorList>
    </citation>
    <scope>NUCLEOTIDE SEQUENCE [LARGE SCALE MRNA]</scope>
    <source>
        <tissue>Kidney</tissue>
    </source>
</reference>
<reference key="3">
    <citation type="journal article" date="1990" name="Mol. Endocrinol.">
        <title>Lipoprotein lipase gene expression in rat adipocytes is regulated by isoproterenol and insulin through different mechanisms.</title>
        <authorList>
            <person name="Raynolds M.V."/>
            <person name="Awald P.D."/>
            <person name="Gordon D.F."/>
            <person name="Gutierrez-Hartmann A."/>
            <person name="Rule D.C."/>
            <person name="Wood W.M."/>
            <person name="Eckel R.H."/>
        </authorList>
    </citation>
    <scope>NUCLEOTIDE SEQUENCE [MRNA] OF 336-474</scope>
    <scope>INDUCTION</scope>
    <source>
        <tissue>Heart</tissue>
    </source>
</reference>
<reference key="4">
    <citation type="journal article" date="2009" name="Free Radic. Biol. Med.">
        <title>Lipoprotein lipase is nitrated in vivo after lipopolysaccharide challenge.</title>
        <authorList>
            <person name="Casanovas A."/>
            <person name="Carrascal M."/>
            <person name="Abian J."/>
            <person name="Lopez-Tejero M.D."/>
            <person name="Llobera M."/>
        </authorList>
    </citation>
    <scope>NITRATION AT TYR-121; TYR-191 AND TYR-343</scope>
    <scope>IDENTIFICATION BY MASS SPECTROMETRY</scope>
</reference>
<reference key="5">
    <citation type="journal article" date="2009" name="J. Proteomics">
        <title>Discovery of lipoprotein lipase pI isoforms and contributions to their characterization.</title>
        <authorList>
            <person name="Casanovas A."/>
            <person name="Carrascal M."/>
            <person name="Abian J."/>
            <person name="Lopez-Tejero M.D."/>
            <person name="Llobera M."/>
        </authorList>
    </citation>
    <scope>IDENTIFICATION BY MASS SPECTROMETRY</scope>
    <scope>GLYCOSYLATION</scope>
</reference>
<keyword id="KW-0106">Calcium</keyword>
<keyword id="KW-1003">Cell membrane</keyword>
<keyword id="KW-0162">Chylomicron</keyword>
<keyword id="KW-1015">Disulfide bond</keyword>
<keyword id="KW-0272">Extracellular matrix</keyword>
<keyword id="KW-0325">Glycoprotein</keyword>
<keyword id="KW-0358">Heparin-binding</keyword>
<keyword id="KW-0378">Hydrolase</keyword>
<keyword id="KW-0442">Lipid degradation</keyword>
<keyword id="KW-0443">Lipid metabolism</keyword>
<keyword id="KW-0472">Membrane</keyword>
<keyword id="KW-0479">Metal-binding</keyword>
<keyword id="KW-0944">Nitration</keyword>
<keyword id="KW-1185">Reference proteome</keyword>
<keyword id="KW-0964">Secreted</keyword>
<keyword id="KW-0732">Signal</keyword>
<keyword id="KW-0850">VLDL</keyword>
<organism>
    <name type="scientific">Rattus norvegicus</name>
    <name type="common">Rat</name>
    <dbReference type="NCBI Taxonomy" id="10116"/>
    <lineage>
        <taxon>Eukaryota</taxon>
        <taxon>Metazoa</taxon>
        <taxon>Chordata</taxon>
        <taxon>Craniata</taxon>
        <taxon>Vertebrata</taxon>
        <taxon>Euteleostomi</taxon>
        <taxon>Mammalia</taxon>
        <taxon>Eutheria</taxon>
        <taxon>Euarchontoglires</taxon>
        <taxon>Glires</taxon>
        <taxon>Rodentia</taxon>
        <taxon>Myomorpha</taxon>
        <taxon>Muroidea</taxon>
        <taxon>Muridae</taxon>
        <taxon>Murinae</taxon>
        <taxon>Rattus</taxon>
    </lineage>
</organism>